<organism>
    <name type="scientific">Oryza sativa subsp. japonica</name>
    <name type="common">Rice</name>
    <dbReference type="NCBI Taxonomy" id="39947"/>
    <lineage>
        <taxon>Eukaryota</taxon>
        <taxon>Viridiplantae</taxon>
        <taxon>Streptophyta</taxon>
        <taxon>Embryophyta</taxon>
        <taxon>Tracheophyta</taxon>
        <taxon>Spermatophyta</taxon>
        <taxon>Magnoliopsida</taxon>
        <taxon>Liliopsida</taxon>
        <taxon>Poales</taxon>
        <taxon>Poaceae</taxon>
        <taxon>BOP clade</taxon>
        <taxon>Oryzoideae</taxon>
        <taxon>Oryzeae</taxon>
        <taxon>Oryzinae</taxon>
        <taxon>Oryza</taxon>
        <taxon>Oryza sativa</taxon>
    </lineage>
</organism>
<sequence>MARGSGAGGGGGGGGGGLELSVGVGGGGGARGGGGGEAAAAVETAAPISLGRLILSGMVAGGVQYGWALQLSLLTPYVQTLGLSHALTSFMWLCGPIAGMVVQPCVGLYSDRCTSKWGRRRPYILTGCVLICLAVVVIGFSADIGYAMGDTKEDCSVYHGSRWHAAIVYVLGFWLLDFSNNTVQGPARALMADLSGRHGPGTANSIFCSWMAMGNILGYSSGSTNNWHKWFPFLKTRACCEACANLKGAFLVAVIFLSLCLVITLIFAKEVPFKGNAALPTKSNEPAEPEGTGPLAVLKGFRNLPTGMPSVLIVTGLTWLSWFPFILYDTDWMGREIYHGDPKGTDPQIEAFNQGVRAGAFGLLLNSIVLGFSSFLIEPMCRKVGPRVVWVTSNFLVCIAMAATALISFWSLKDFHGTVQKAITADKSIKAVCLVLFAFLGVPLAVLYSVPFAVTAQLAATRGGGQGLCTGVLNISIVIPQVVIALGAGPWDELFGKGNIPAFGLASGFALIGGVAGIFLLPKISKRQFRSVSMGGGH</sequence>
<keyword id="KW-0025">Alternative splicing</keyword>
<keyword id="KW-1003">Cell membrane</keyword>
<keyword id="KW-0472">Membrane</keyword>
<keyword id="KW-1185">Reference proteome</keyword>
<keyword id="KW-0762">Sugar transport</keyword>
<keyword id="KW-0769">Symport</keyword>
<keyword id="KW-0812">Transmembrane</keyword>
<keyword id="KW-1133">Transmembrane helix</keyword>
<keyword id="KW-0813">Transport</keyword>
<feature type="chain" id="PRO_0000398189" description="Sucrose transport protein SUT1">
    <location>
        <begin position="1"/>
        <end position="538"/>
    </location>
</feature>
<feature type="topological domain" description="Cytoplasmic" evidence="2">
    <location>
        <begin position="1"/>
        <end position="52"/>
    </location>
</feature>
<feature type="transmembrane region" description="Helical" evidence="2">
    <location>
        <begin position="53"/>
        <end position="73"/>
    </location>
</feature>
<feature type="topological domain" description="Extracellular" evidence="2">
    <location>
        <begin position="74"/>
        <end position="81"/>
    </location>
</feature>
<feature type="transmembrane region" description="Helical" evidence="2">
    <location>
        <begin position="82"/>
        <end position="102"/>
    </location>
</feature>
<feature type="topological domain" description="Cytoplasmic" evidence="2">
    <location>
        <begin position="103"/>
        <end position="123"/>
    </location>
</feature>
<feature type="transmembrane region" description="Helical" evidence="2">
    <location>
        <begin position="124"/>
        <end position="144"/>
    </location>
</feature>
<feature type="topological domain" description="Extracellular" evidence="2">
    <location>
        <begin position="145"/>
        <end position="162"/>
    </location>
</feature>
<feature type="transmembrane region" description="Helical" evidence="2">
    <location>
        <begin position="163"/>
        <end position="183"/>
    </location>
</feature>
<feature type="topological domain" description="Cytoplasmic" evidence="2">
    <location>
        <begin position="184"/>
        <end position="198"/>
    </location>
</feature>
<feature type="transmembrane region" description="Helical" evidence="2">
    <location>
        <begin position="199"/>
        <end position="219"/>
    </location>
</feature>
<feature type="topological domain" description="Extracellular" evidence="2">
    <location>
        <begin position="220"/>
        <end position="247"/>
    </location>
</feature>
<feature type="transmembrane region" description="Helical" evidence="2">
    <location>
        <begin position="248"/>
        <end position="268"/>
    </location>
</feature>
<feature type="topological domain" description="Cytoplasmic" evidence="2">
    <location>
        <begin position="269"/>
        <end position="306"/>
    </location>
</feature>
<feature type="transmembrane region" description="Helical" evidence="2">
    <location>
        <begin position="307"/>
        <end position="327"/>
    </location>
</feature>
<feature type="topological domain" description="Extracellular" evidence="2">
    <location>
        <begin position="328"/>
        <end position="357"/>
    </location>
</feature>
<feature type="transmembrane region" description="Helical" evidence="2">
    <location>
        <begin position="358"/>
        <end position="378"/>
    </location>
</feature>
<feature type="topological domain" description="Cytoplasmic" evidence="2">
    <location>
        <begin position="379"/>
        <end position="388"/>
    </location>
</feature>
<feature type="transmembrane region" description="Helical" evidence="2">
    <location>
        <begin position="389"/>
        <end position="409"/>
    </location>
</feature>
<feature type="topological domain" description="Extracellular" evidence="2">
    <location>
        <begin position="410"/>
        <end position="433"/>
    </location>
</feature>
<feature type="transmembrane region" description="Helical" evidence="2">
    <location>
        <begin position="434"/>
        <end position="454"/>
    </location>
</feature>
<feature type="topological domain" description="Cytoplasmic" evidence="2">
    <location>
        <begin position="455"/>
        <end position="470"/>
    </location>
</feature>
<feature type="transmembrane region" description="Helical" evidence="2">
    <location>
        <begin position="471"/>
        <end position="491"/>
    </location>
</feature>
<feature type="topological domain" description="Extracellular" evidence="2">
    <location>
        <begin position="492"/>
        <end position="499"/>
    </location>
</feature>
<feature type="transmembrane region" description="Helical" evidence="2">
    <location>
        <begin position="500"/>
        <end position="520"/>
    </location>
</feature>
<feature type="topological domain" description="Cytoplasmic" evidence="2">
    <location>
        <begin position="521"/>
        <end position="538"/>
    </location>
</feature>
<feature type="splice variant" id="VSP_039739" description="In isoform 4." evidence="8">
    <original>LYSVPFA</original>
    <variation>RITDTST</variation>
    <location>
        <begin position="447"/>
        <end position="453"/>
    </location>
</feature>
<feature type="splice variant" id="VSP_039740" description="In isoform 4." evidence="8">
    <location>
        <begin position="454"/>
        <end position="538"/>
    </location>
</feature>
<feature type="splice variant" id="VSP_039741" description="In isoform 2." evidence="8">
    <original>LCTGVLNISIVIPQVVIALGAGPWDELFGKGNIPAFGLASGFALIGGVAGIFLLPKISKRQFRSVSMGGGH</original>
    <variation>MNPNILAAFLDIIRCCLDAGLIHGDLQGSAPASSTSPSSSLRWSSRWEPGRGTSCSGRGTSRRSASPRDSRSSAASPEYSCCPRSPSASSGRSAWAAVTDRPALAAGCGGGGGRSSAAGSGELCSSRLQWIKGAPSFFLHRVIN</variation>
    <location>
        <begin position="468"/>
        <end position="538"/>
    </location>
</feature>
<feature type="splice variant" id="VSP_039742" description="In isoform 3." evidence="8">
    <original>V</original>
    <variation>N</variation>
    <location>
        <position position="483"/>
    </location>
</feature>
<feature type="splice variant" id="VSP_039743" description="In isoform 3." evidence="8">
    <location>
        <begin position="484"/>
        <end position="538"/>
    </location>
</feature>
<feature type="sequence conflict" description="In Ref. 1; BAA24071." evidence="8" ref="1">
    <location>
        <position position="29"/>
    </location>
</feature>
<feature type="sequence conflict" description="In Ref. 1; BAA24071." evidence="8" ref="1">
    <original>R</original>
    <variation>W</variation>
    <location>
        <position position="530"/>
    </location>
</feature>
<gene>
    <name type="primary">SUT1</name>
    <name type="ordered locus">Os03g0170900</name>
    <name type="ordered locus">LOC_Os03g07480</name>
    <name type="ORF">OSJNBa0091P11.1</name>
</gene>
<name>SUT1_ORYSJ</name>
<comment type="function">
    <text evidence="5 6 7">Responsible for the transport of sucrose into the cell, with the concomitant uptake of protons (symport system). Can also transport other glucosides such as maltose, salicin, helicin, and alpha-phenylglucoside. Probably required for apoplastic phloem sucrose loading in source tissues (e.g. leaves) in order to transport it to sink tissues (e.g. roots, flowers). Probably not involved in transport of sugars across the symplastic discontinuity between the endosperm and the embryo. Essential for normal pollen germination, but not for pollen maturation or starch accumulation in pollen.</text>
</comment>
<comment type="biophysicochemical properties">
    <kinetics>
        <KM evidence="5">7.5 mM for sucrose (at pH 5.6)</KM>
    </kinetics>
    <phDependence>
        <text evidence="5">Optimum pH is 5.</text>
    </phDependence>
</comment>
<comment type="pathway">
    <text>Glycan biosynthesis; sucrose metabolism.</text>
</comment>
<comment type="subunit">
    <text evidence="1">Homodimer.</text>
</comment>
<comment type="subcellular location">
    <subcellularLocation>
        <location evidence="8">Cell membrane</location>
        <topology evidence="8">Multi-pass membrane protein</topology>
    </subcellularLocation>
</comment>
<comment type="alternative products">
    <event type="alternative splicing"/>
    <isoform>
        <id>Q10R54-1</id>
        <name>1</name>
        <sequence type="displayed"/>
    </isoform>
    <isoform>
        <id>Q10R54-2</id>
        <name>2</name>
        <sequence type="described" ref="VSP_039741"/>
    </isoform>
    <isoform>
        <id>Q10R54-3</id>
        <name>3</name>
        <sequence type="described" ref="VSP_039742 VSP_039743"/>
    </isoform>
    <isoform>
        <id>Q10R54-4</id>
        <name>4</name>
        <sequence type="described" ref="VSP_039739 VSP_039740"/>
    </isoform>
</comment>
<comment type="tissue specificity">
    <text evidence="3 4 7">Widely expressed. Highly expressed in embryo, endosperm, germinating seeds, source leaf sheaths and panicles, but at very low levels in roots. Expressed in phloem companion cells.</text>
</comment>
<comment type="developmental stage">
    <text evidence="4 6">Expressed in developing caryopses from 3 days after flowering (DAF), increases to a maximal level at 5 to 7 DAF, and then gradually declines to a barely detectable level by 20 DAF when grain filling stage nearly terminates. Expressed in developing pollen and anther walls from 5 to 1 day before anthesis.</text>
</comment>
<comment type="induction">
    <text evidence="3 7">By exogenous sugar supply. Down-regulated by sugar starvation and light in dark-grown seedlings.</text>
</comment>
<comment type="disruption phenotype">
    <text evidence="6">Male sterility probably due to impaired pollen germination.</text>
</comment>
<comment type="similarity">
    <text evidence="8">Belongs to the glycoside-pentoside-hexuronide (GPH) cation symporter transporter (TC 2.A.2.4) family.</text>
</comment>
<evidence type="ECO:0000250" key="1"/>
<evidence type="ECO:0000255" key="2"/>
<evidence type="ECO:0000269" key="3">
    <source>
    </source>
</evidence>
<evidence type="ECO:0000269" key="4">
    <source>
    </source>
</evidence>
<evidence type="ECO:0000269" key="5">
    <source>
    </source>
</evidence>
<evidence type="ECO:0000269" key="6">
    <source>
    </source>
</evidence>
<evidence type="ECO:0000269" key="7">
    <source>
    </source>
</evidence>
<evidence type="ECO:0000305" key="8"/>
<reference key="1">
    <citation type="journal article" date="1997" name="Plant Cell Physiol.">
        <title>cDNA cloning and tissue specific expression of a gene for sucrose transporter from rice (Oryza sativa L.).</title>
        <authorList>
            <person name="Hirose T."/>
            <person name="Imaizumi N."/>
            <person name="Scofield G.N."/>
            <person name="Furbank R.T."/>
            <person name="Ohsugi R."/>
        </authorList>
    </citation>
    <scope>NUCLEOTIDE SEQUENCE [MRNA]</scope>
    <scope>FUNCTION</scope>
    <scope>TISSUE SPECIFICITY</scope>
    <scope>INDUCTION</scope>
    <source>
        <strain>cv. Nipponbare</strain>
        <tissue>Leaf</tissue>
    </source>
</reference>
<reference key="2">
    <citation type="journal article" date="2005" name="Genome Res.">
        <title>Sequence, annotation, and analysis of synteny between rice chromosome 3 and diverged grass species.</title>
        <authorList>
            <consortium name="The rice chromosome 3 sequencing consortium"/>
            <person name="Buell C.R."/>
            <person name="Yuan Q."/>
            <person name="Ouyang S."/>
            <person name="Liu J."/>
            <person name="Zhu W."/>
            <person name="Wang A."/>
            <person name="Maiti R."/>
            <person name="Haas B."/>
            <person name="Wortman J."/>
            <person name="Pertea M."/>
            <person name="Jones K.M."/>
            <person name="Kim M."/>
            <person name="Overton L."/>
            <person name="Tsitrin T."/>
            <person name="Fadrosh D."/>
            <person name="Bera J."/>
            <person name="Weaver B."/>
            <person name="Jin S."/>
            <person name="Johri S."/>
            <person name="Reardon M."/>
            <person name="Webb K."/>
            <person name="Hill J."/>
            <person name="Moffat K."/>
            <person name="Tallon L."/>
            <person name="Van Aken S."/>
            <person name="Lewis M."/>
            <person name="Utterback T."/>
            <person name="Feldblyum T."/>
            <person name="Zismann V."/>
            <person name="Iobst S."/>
            <person name="Hsiao J."/>
            <person name="de Vazeille A.R."/>
            <person name="Salzberg S.L."/>
            <person name="White O."/>
            <person name="Fraser C.M."/>
            <person name="Yu Y."/>
            <person name="Kim H."/>
            <person name="Rambo T."/>
            <person name="Currie J."/>
            <person name="Collura K."/>
            <person name="Kernodle-Thompson S."/>
            <person name="Wei F."/>
            <person name="Kudrna K."/>
            <person name="Ammiraju J.S.S."/>
            <person name="Luo M."/>
            <person name="Goicoechea J.L."/>
            <person name="Wing R.A."/>
            <person name="Henry D."/>
            <person name="Oates R."/>
            <person name="Palmer M."/>
            <person name="Pries G."/>
            <person name="Saski C."/>
            <person name="Simmons J."/>
            <person name="Soderlund C."/>
            <person name="Nelson W."/>
            <person name="de la Bastide M."/>
            <person name="Spiegel L."/>
            <person name="Nascimento L."/>
            <person name="Huang E."/>
            <person name="Preston R."/>
            <person name="Zutavern T."/>
            <person name="Palmer L."/>
            <person name="O'Shaughnessy A."/>
            <person name="Dike S."/>
            <person name="McCombie W.R."/>
            <person name="Minx P."/>
            <person name="Cordum H."/>
            <person name="Wilson R."/>
            <person name="Jin W."/>
            <person name="Lee H.R."/>
            <person name="Jiang J."/>
            <person name="Jackson S."/>
        </authorList>
    </citation>
    <scope>NUCLEOTIDE SEQUENCE [LARGE SCALE GENOMIC DNA]</scope>
    <source>
        <strain>cv. Nipponbare</strain>
    </source>
</reference>
<reference key="3">
    <citation type="journal article" date="2005" name="Nature">
        <title>The map-based sequence of the rice genome.</title>
        <authorList>
            <consortium name="International rice genome sequencing project (IRGSP)"/>
        </authorList>
    </citation>
    <scope>NUCLEOTIDE SEQUENCE [LARGE SCALE GENOMIC DNA]</scope>
    <source>
        <strain>cv. Nipponbare</strain>
    </source>
</reference>
<reference key="4">
    <citation type="journal article" date="2008" name="Nucleic Acids Res.">
        <title>The rice annotation project database (RAP-DB): 2008 update.</title>
        <authorList>
            <consortium name="The rice annotation project (RAP)"/>
        </authorList>
    </citation>
    <scope>GENOME REANNOTATION</scope>
    <source>
        <strain>cv. Nipponbare</strain>
    </source>
</reference>
<reference key="5">
    <citation type="journal article" date="2013" name="Rice">
        <title>Improvement of the Oryza sativa Nipponbare reference genome using next generation sequence and optical map data.</title>
        <authorList>
            <person name="Kawahara Y."/>
            <person name="de la Bastide M."/>
            <person name="Hamilton J.P."/>
            <person name="Kanamori H."/>
            <person name="McCombie W.R."/>
            <person name="Ouyang S."/>
            <person name="Schwartz D.C."/>
            <person name="Tanaka T."/>
            <person name="Wu J."/>
            <person name="Zhou S."/>
            <person name="Childs K.L."/>
            <person name="Davidson R.M."/>
            <person name="Lin H."/>
            <person name="Quesada-Ocampo L."/>
            <person name="Vaillancourt B."/>
            <person name="Sakai H."/>
            <person name="Lee S.S."/>
            <person name="Kim J."/>
            <person name="Numa H."/>
            <person name="Itoh T."/>
            <person name="Buell C.R."/>
            <person name="Matsumoto T."/>
        </authorList>
    </citation>
    <scope>GENOME REANNOTATION</scope>
    <source>
        <strain>cv. Nipponbare</strain>
    </source>
</reference>
<reference key="6">
    <citation type="journal article" date="2003" name="Science">
        <title>Collection, mapping, and annotation of over 28,000 cDNA clones from japonica rice.</title>
        <authorList>
            <consortium name="The rice full-length cDNA consortium"/>
        </authorList>
    </citation>
    <scope>NUCLEOTIDE SEQUENCE [LARGE SCALE MRNA]</scope>
    <source>
        <strain>cv. Nipponbare</strain>
    </source>
</reference>
<reference key="7">
    <citation type="journal article" date="2000" name="Plant Physiol.">
        <title>Sugar uptake and transport in rice embryo. Expression of companion cell-specific sucrose transporter (OsSUT1) induced by sugar and light.</title>
        <authorList>
            <person name="Matsukura C."/>
            <person name="Saitoh T."/>
            <person name="Hirose T."/>
            <person name="Ohsugi R."/>
            <person name="Perata P."/>
            <person name="Yamaguchi J."/>
        </authorList>
    </citation>
    <scope>TISSUE SPECIFICITY</scope>
    <scope>INDUCTION</scope>
</reference>
<reference key="8">
    <citation type="journal article" date="2003" name="Plant Cell Physiol.">
        <title>The sucrose transporter gene family in rice.</title>
        <authorList>
            <person name="Aoki N."/>
            <person name="Hirose T."/>
            <person name="Scofield G.N."/>
            <person name="Whitfeld P.R."/>
            <person name="Furbank R.T."/>
        </authorList>
    </citation>
    <scope>TISSUE SPECIFICITY</scope>
    <scope>DEVELOPMENTAL STAGE</scope>
</reference>
<reference key="9">
    <citation type="journal article" date="2010" name="J. Exp. Bot.">
        <title>Disruption of a gene for rice sucrose transporter, OsSUT1, impairs pollen function but pollen maturation is unaffected.</title>
        <authorList>
            <person name="Hirose T."/>
            <person name="Zhang Z."/>
            <person name="Miyao A."/>
            <person name="Hirochika H."/>
            <person name="Ohsugi R."/>
            <person name="Terao T."/>
        </authorList>
    </citation>
    <scope>FUNCTION</scope>
    <scope>DEVELOPMENTAL STAGE</scope>
    <scope>DISRUPTION PHENOTYPE</scope>
</reference>
<reference key="10">
    <citation type="journal article" date="2010" name="Plant Cell Physiol.">
        <title>Transport activity of rice sucrose transporters OsSUT1 and OsSUT5.</title>
        <authorList>
            <person name="Sun Y."/>
            <person name="Reinders A."/>
            <person name="LaFleur K.R."/>
            <person name="Mori T."/>
            <person name="Ward J.M."/>
        </authorList>
    </citation>
    <scope>FUNCTION</scope>
    <scope>BIOPHYSICOCHEMICAL PROPERTIES</scope>
</reference>
<accession>Q10R54</accession>
<accession>A0A0P0VTV7</accession>
<accession>O49838</accession>
<accession>Q10R52</accession>
<accession>Q10R53</accession>
<accession>Q10R55</accession>
<accession>Q8S7X2</accession>
<dbReference type="EMBL" id="D87819">
    <property type="protein sequence ID" value="BAA24071.1"/>
    <property type="molecule type" value="mRNA"/>
</dbReference>
<dbReference type="EMBL" id="AC073556">
    <property type="protein sequence ID" value="AAL84308.1"/>
    <property type="molecule type" value="Genomic_DNA"/>
</dbReference>
<dbReference type="EMBL" id="DP000009">
    <property type="protein sequence ID" value="ABF94211.1"/>
    <property type="molecule type" value="Genomic_DNA"/>
</dbReference>
<dbReference type="EMBL" id="DP000009">
    <property type="protein sequence ID" value="ABF94212.1"/>
    <property type="molecule type" value="Genomic_DNA"/>
</dbReference>
<dbReference type="EMBL" id="DP000009">
    <property type="protein sequence ID" value="ABF94213.1"/>
    <property type="molecule type" value="Genomic_DNA"/>
</dbReference>
<dbReference type="EMBL" id="DP000009">
    <property type="protein sequence ID" value="ABF94214.1"/>
    <property type="molecule type" value="Genomic_DNA"/>
</dbReference>
<dbReference type="EMBL" id="AP008209">
    <property type="protein sequence ID" value="BAF11025.1"/>
    <property type="molecule type" value="Genomic_DNA"/>
</dbReference>
<dbReference type="EMBL" id="AP014959">
    <property type="protein sequence ID" value="BAS82530.1"/>
    <property type="molecule type" value="Genomic_DNA"/>
</dbReference>
<dbReference type="EMBL" id="AK100027">
    <property type="protein sequence ID" value="BAG94404.1"/>
    <property type="molecule type" value="mRNA"/>
</dbReference>
<dbReference type="PIR" id="T02982">
    <property type="entry name" value="T02982"/>
</dbReference>
<dbReference type="RefSeq" id="XP_015633173.1">
    <molecule id="Q10R54-2"/>
    <property type="nucleotide sequence ID" value="XM_015777687.1"/>
</dbReference>
<dbReference type="RefSeq" id="XP_015633174.1">
    <property type="nucleotide sequence ID" value="XM_015777688.1"/>
</dbReference>
<dbReference type="SMR" id="Q10R54"/>
<dbReference type="FunCoup" id="Q10R54">
    <property type="interactions" value="590"/>
</dbReference>
<dbReference type="STRING" id="39947.Q10R54"/>
<dbReference type="PaxDb" id="39947-Q10R54"/>
<dbReference type="EnsemblPlants" id="Os03t0170900-01">
    <molecule id="Q10R54-1"/>
    <property type="protein sequence ID" value="Os03t0170900-01"/>
    <property type="gene ID" value="Os03g0170900"/>
</dbReference>
<dbReference type="GeneID" id="4331775"/>
<dbReference type="Gramene" id="Os03t0170900-01">
    <molecule id="Q10R54-1"/>
    <property type="protein sequence ID" value="Os03t0170900-01"/>
    <property type="gene ID" value="Os03g0170900"/>
</dbReference>
<dbReference type="KEGG" id="dosa:Os03g0170900"/>
<dbReference type="eggNOG" id="KOG0637">
    <property type="taxonomic scope" value="Eukaryota"/>
</dbReference>
<dbReference type="HOGENOM" id="CLU_025234_3_0_1"/>
<dbReference type="InParanoid" id="Q10R54"/>
<dbReference type="OMA" id="IYTTIPQ"/>
<dbReference type="OrthoDB" id="28755at2759"/>
<dbReference type="UniPathway" id="UPA00238"/>
<dbReference type="Proteomes" id="UP000000763">
    <property type="component" value="Chromosome 3"/>
</dbReference>
<dbReference type="Proteomes" id="UP000059680">
    <property type="component" value="Chromosome 3"/>
</dbReference>
<dbReference type="ExpressionAtlas" id="Q10R54">
    <property type="expression patterns" value="baseline and differential"/>
</dbReference>
<dbReference type="GO" id="GO:0016020">
    <property type="term" value="C:membrane"/>
    <property type="evidence" value="ECO:0000318"/>
    <property type="project" value="GO_Central"/>
</dbReference>
<dbReference type="GO" id="GO:0005886">
    <property type="term" value="C:plasma membrane"/>
    <property type="evidence" value="ECO:0007669"/>
    <property type="project" value="UniProtKB-SubCell"/>
</dbReference>
<dbReference type="GO" id="GO:0005364">
    <property type="term" value="F:maltose:proton symporter activity"/>
    <property type="evidence" value="ECO:0000314"/>
    <property type="project" value="UniProtKB"/>
</dbReference>
<dbReference type="GO" id="GO:0042950">
    <property type="term" value="F:salicin transmembrane transporter activity"/>
    <property type="evidence" value="ECO:0000314"/>
    <property type="project" value="UniProtKB"/>
</dbReference>
<dbReference type="GO" id="GO:0008506">
    <property type="term" value="F:sucrose:proton symporter activity"/>
    <property type="evidence" value="ECO:0000314"/>
    <property type="project" value="UniProtKB"/>
</dbReference>
<dbReference type="GO" id="GO:0015768">
    <property type="term" value="P:maltose transport"/>
    <property type="evidence" value="ECO:0000314"/>
    <property type="project" value="UniProtKB"/>
</dbReference>
<dbReference type="GO" id="GO:0009846">
    <property type="term" value="P:pollen germination"/>
    <property type="evidence" value="ECO:0000315"/>
    <property type="project" value="UniProtKB"/>
</dbReference>
<dbReference type="GO" id="GO:0005985">
    <property type="term" value="P:sucrose metabolic process"/>
    <property type="evidence" value="ECO:0007669"/>
    <property type="project" value="UniProtKB-UniPathway"/>
</dbReference>
<dbReference type="GO" id="GO:0015770">
    <property type="term" value="P:sucrose transport"/>
    <property type="evidence" value="ECO:0000314"/>
    <property type="project" value="UniProtKB"/>
</dbReference>
<dbReference type="CDD" id="cd17313">
    <property type="entry name" value="MFS_SLC45_SUC"/>
    <property type="match status" value="1"/>
</dbReference>
<dbReference type="FunFam" id="1.20.1250.20:FF:000366">
    <property type="entry name" value="Sucrose transport protein SUT5"/>
    <property type="match status" value="1"/>
</dbReference>
<dbReference type="FunFam" id="1.20.1250.20:FF:000182">
    <property type="entry name" value="Sucrose transporter SUC2"/>
    <property type="match status" value="1"/>
</dbReference>
<dbReference type="Gene3D" id="1.20.1250.20">
    <property type="entry name" value="MFS general substrate transporter like domains"/>
    <property type="match status" value="2"/>
</dbReference>
<dbReference type="InterPro" id="IPR036259">
    <property type="entry name" value="MFS_trans_sf"/>
</dbReference>
<dbReference type="InterPro" id="IPR005989">
    <property type="entry name" value="Suc_symporter_pln"/>
</dbReference>
<dbReference type="NCBIfam" id="TIGR01301">
    <property type="entry name" value="GPH_sucrose"/>
    <property type="match status" value="1"/>
</dbReference>
<dbReference type="PANTHER" id="PTHR19432:SF64">
    <property type="entry name" value="SUCROSE TRANSPORT PROTEIN SUT1"/>
    <property type="match status" value="1"/>
</dbReference>
<dbReference type="PANTHER" id="PTHR19432">
    <property type="entry name" value="SUGAR TRANSPORTER"/>
    <property type="match status" value="1"/>
</dbReference>
<dbReference type="Pfam" id="PF13347">
    <property type="entry name" value="MFS_2"/>
    <property type="match status" value="1"/>
</dbReference>
<dbReference type="SUPFAM" id="SSF103473">
    <property type="entry name" value="MFS general substrate transporter"/>
    <property type="match status" value="1"/>
</dbReference>
<protein>
    <recommendedName>
        <fullName>Sucrose transport protein SUT1</fullName>
    </recommendedName>
    <alternativeName>
        <fullName>Sucrose permease 1</fullName>
    </alternativeName>
    <alternativeName>
        <fullName>Sucrose transporter 1</fullName>
        <shortName>OsSUT1</shortName>
    </alternativeName>
    <alternativeName>
        <fullName>Sucrose-proton symporter 1</fullName>
    </alternativeName>
</protein>
<proteinExistence type="evidence at protein level"/>